<organism>
    <name type="scientific">Nitratiruptor sp. (strain SB155-2)</name>
    <dbReference type="NCBI Taxonomy" id="387092"/>
    <lineage>
        <taxon>Bacteria</taxon>
        <taxon>Pseudomonadati</taxon>
        <taxon>Campylobacterota</taxon>
        <taxon>Epsilonproteobacteria</taxon>
        <taxon>Nautiliales</taxon>
        <taxon>Nitratiruptoraceae</taxon>
        <taxon>Nitratiruptor</taxon>
    </lineage>
</organism>
<name>SYE1_NITSB</name>
<gene>
    <name evidence="1" type="primary">gltX1</name>
    <name type="ordered locus">NIS_0801</name>
</gene>
<dbReference type="EC" id="6.1.1.17" evidence="1"/>
<dbReference type="EMBL" id="AP009178">
    <property type="protein sequence ID" value="BAF69913.1"/>
    <property type="molecule type" value="Genomic_DNA"/>
</dbReference>
<dbReference type="RefSeq" id="WP_012082176.1">
    <property type="nucleotide sequence ID" value="NC_009662.1"/>
</dbReference>
<dbReference type="SMR" id="A6Q354"/>
<dbReference type="STRING" id="387092.NIS_0801"/>
<dbReference type="KEGG" id="nis:NIS_0801"/>
<dbReference type="eggNOG" id="COG0008">
    <property type="taxonomic scope" value="Bacteria"/>
</dbReference>
<dbReference type="HOGENOM" id="CLU_015768_6_0_7"/>
<dbReference type="InParanoid" id="A6Q354"/>
<dbReference type="OrthoDB" id="9807503at2"/>
<dbReference type="Proteomes" id="UP000001118">
    <property type="component" value="Chromosome"/>
</dbReference>
<dbReference type="GO" id="GO:0005829">
    <property type="term" value="C:cytosol"/>
    <property type="evidence" value="ECO:0007669"/>
    <property type="project" value="TreeGrafter"/>
</dbReference>
<dbReference type="GO" id="GO:0005524">
    <property type="term" value="F:ATP binding"/>
    <property type="evidence" value="ECO:0007669"/>
    <property type="project" value="UniProtKB-UniRule"/>
</dbReference>
<dbReference type="GO" id="GO:0004818">
    <property type="term" value="F:glutamate-tRNA ligase activity"/>
    <property type="evidence" value="ECO:0007669"/>
    <property type="project" value="UniProtKB-UniRule"/>
</dbReference>
<dbReference type="GO" id="GO:0000049">
    <property type="term" value="F:tRNA binding"/>
    <property type="evidence" value="ECO:0007669"/>
    <property type="project" value="InterPro"/>
</dbReference>
<dbReference type="GO" id="GO:0006424">
    <property type="term" value="P:glutamyl-tRNA aminoacylation"/>
    <property type="evidence" value="ECO:0007669"/>
    <property type="project" value="UniProtKB-UniRule"/>
</dbReference>
<dbReference type="Gene3D" id="1.10.10.350">
    <property type="match status" value="1"/>
</dbReference>
<dbReference type="Gene3D" id="3.40.50.620">
    <property type="entry name" value="HUPs"/>
    <property type="match status" value="1"/>
</dbReference>
<dbReference type="HAMAP" id="MF_00022">
    <property type="entry name" value="Glu_tRNA_synth_type1"/>
    <property type="match status" value="1"/>
</dbReference>
<dbReference type="InterPro" id="IPR045462">
    <property type="entry name" value="aa-tRNA-synth_I_cd-bd"/>
</dbReference>
<dbReference type="InterPro" id="IPR020751">
    <property type="entry name" value="aa-tRNA-synth_I_codon-bd_sub2"/>
</dbReference>
<dbReference type="InterPro" id="IPR001412">
    <property type="entry name" value="aa-tRNA-synth_I_CS"/>
</dbReference>
<dbReference type="InterPro" id="IPR008925">
    <property type="entry name" value="aa_tRNA-synth_I_cd-bd_sf"/>
</dbReference>
<dbReference type="InterPro" id="IPR004527">
    <property type="entry name" value="Glu-tRNA-ligase_bac/mito"/>
</dbReference>
<dbReference type="InterPro" id="IPR000924">
    <property type="entry name" value="Glu/Gln-tRNA-synth"/>
</dbReference>
<dbReference type="InterPro" id="IPR020058">
    <property type="entry name" value="Glu/Gln-tRNA-synth_Ib_cat-dom"/>
</dbReference>
<dbReference type="InterPro" id="IPR049940">
    <property type="entry name" value="GluQ/Sye"/>
</dbReference>
<dbReference type="InterPro" id="IPR014729">
    <property type="entry name" value="Rossmann-like_a/b/a_fold"/>
</dbReference>
<dbReference type="NCBIfam" id="TIGR00464">
    <property type="entry name" value="gltX_bact"/>
    <property type="match status" value="1"/>
</dbReference>
<dbReference type="PANTHER" id="PTHR43311">
    <property type="entry name" value="GLUTAMATE--TRNA LIGASE"/>
    <property type="match status" value="1"/>
</dbReference>
<dbReference type="PANTHER" id="PTHR43311:SF2">
    <property type="entry name" value="GLUTAMATE--TRNA LIGASE, MITOCHONDRIAL-RELATED"/>
    <property type="match status" value="1"/>
</dbReference>
<dbReference type="Pfam" id="PF19269">
    <property type="entry name" value="Anticodon_2"/>
    <property type="match status" value="1"/>
</dbReference>
<dbReference type="Pfam" id="PF00749">
    <property type="entry name" value="tRNA-synt_1c"/>
    <property type="match status" value="1"/>
</dbReference>
<dbReference type="PRINTS" id="PR00987">
    <property type="entry name" value="TRNASYNTHGLU"/>
</dbReference>
<dbReference type="SUPFAM" id="SSF48163">
    <property type="entry name" value="An anticodon-binding domain of class I aminoacyl-tRNA synthetases"/>
    <property type="match status" value="1"/>
</dbReference>
<dbReference type="SUPFAM" id="SSF52374">
    <property type="entry name" value="Nucleotidylyl transferase"/>
    <property type="match status" value="1"/>
</dbReference>
<dbReference type="PROSITE" id="PS00178">
    <property type="entry name" value="AA_TRNA_LIGASE_I"/>
    <property type="match status" value="1"/>
</dbReference>
<comment type="function">
    <text evidence="1">Catalyzes the attachment of glutamate to tRNA(Glu) in a two-step reaction: glutamate is first activated by ATP to form Glu-AMP and then transferred to the acceptor end of tRNA(Glu).</text>
</comment>
<comment type="catalytic activity">
    <reaction evidence="1">
        <text>tRNA(Glu) + L-glutamate + ATP = L-glutamyl-tRNA(Glu) + AMP + diphosphate</text>
        <dbReference type="Rhea" id="RHEA:23540"/>
        <dbReference type="Rhea" id="RHEA-COMP:9663"/>
        <dbReference type="Rhea" id="RHEA-COMP:9680"/>
        <dbReference type="ChEBI" id="CHEBI:29985"/>
        <dbReference type="ChEBI" id="CHEBI:30616"/>
        <dbReference type="ChEBI" id="CHEBI:33019"/>
        <dbReference type="ChEBI" id="CHEBI:78442"/>
        <dbReference type="ChEBI" id="CHEBI:78520"/>
        <dbReference type="ChEBI" id="CHEBI:456215"/>
        <dbReference type="EC" id="6.1.1.17"/>
    </reaction>
</comment>
<comment type="subunit">
    <text evidence="1">Monomer.</text>
</comment>
<comment type="subcellular location">
    <subcellularLocation>
        <location evidence="1">Cytoplasm</location>
    </subcellularLocation>
</comment>
<comment type="similarity">
    <text evidence="1">Belongs to the class-I aminoacyl-tRNA synthetase family. Glutamate--tRNA ligase type 1 subfamily.</text>
</comment>
<keyword id="KW-0030">Aminoacyl-tRNA synthetase</keyword>
<keyword id="KW-0067">ATP-binding</keyword>
<keyword id="KW-0963">Cytoplasm</keyword>
<keyword id="KW-0436">Ligase</keyword>
<keyword id="KW-0547">Nucleotide-binding</keyword>
<keyword id="KW-0648">Protein biosynthesis</keyword>
<keyword id="KW-1185">Reference proteome</keyword>
<feature type="chain" id="PRO_0000367719" description="Glutamate--tRNA ligase 1">
    <location>
        <begin position="1"/>
        <end position="431"/>
    </location>
</feature>
<feature type="short sequence motif" description="'HIGH' region" evidence="1">
    <location>
        <begin position="6"/>
        <end position="16"/>
    </location>
</feature>
<feature type="short sequence motif" description="'KMSKS' region" evidence="1">
    <location>
        <begin position="235"/>
        <end position="239"/>
    </location>
</feature>
<feature type="binding site" evidence="1">
    <location>
        <position position="238"/>
    </location>
    <ligand>
        <name>ATP</name>
        <dbReference type="ChEBI" id="CHEBI:30616"/>
    </ligand>
</feature>
<protein>
    <recommendedName>
        <fullName evidence="1">Glutamate--tRNA ligase 1</fullName>
        <ecNumber evidence="1">6.1.1.17</ecNumber>
    </recommendedName>
    <alternativeName>
        <fullName evidence="1">Glutamyl-tRNA synthetase 1</fullName>
        <shortName evidence="1">GluRS 1</shortName>
    </alternativeName>
</protein>
<reference key="1">
    <citation type="journal article" date="2007" name="Proc. Natl. Acad. Sci. U.S.A.">
        <title>Deep-sea vent epsilon-proteobacterial genomes provide insights into emergence of pathogens.</title>
        <authorList>
            <person name="Nakagawa S."/>
            <person name="Takaki Y."/>
            <person name="Shimamura S."/>
            <person name="Reysenbach A.-L."/>
            <person name="Takai K."/>
            <person name="Horikoshi K."/>
        </authorList>
    </citation>
    <scope>NUCLEOTIDE SEQUENCE [LARGE SCALE GENOMIC DNA]</scope>
    <source>
        <strain>SB155-2</strain>
    </source>
</reference>
<evidence type="ECO:0000255" key="1">
    <source>
        <dbReference type="HAMAP-Rule" id="MF_00022"/>
    </source>
</evidence>
<accession>A6Q354</accession>
<sequence length="431" mass="49845">MIRFAPSPTGDMHIGNLRVAIFNYIEAKKRNERFLIRIEDTDIERNIEGKDQEILQILDTFGLQYDDVVYQSKNFSFHQNFAYKLLNEGKAFACFCTPQELEKEREQAKKEKRAYRYSGKCENITLDEASQRGEPFVVRIKKPTGTIEFDDIIKGHLAFEPNEVDSFVILRADARPTYNFACAVDDMLYDITLVIRGEDHVSNTPKQIHIRNLLGYDKKIEYAHLPIILNEEGKKMSKRDKASSVKWLLEEGFLPEAIANYLILLGNKTPKEIFTLDEAIAWFDLKNISKAPAKFDIEKLRFINRAHLQMMSEEELEKALGVDEGLGALAKIYLEEASTLKELNTKIDLVLHGKRENETFREEIETLRNLLKSMELPESFDEFKKELMQKSGLKGKKFFKPLRILLTGSEHGPELSELYPAIKNRIKEVIQ</sequence>
<proteinExistence type="inferred from homology"/>